<accession>A1DF27</accession>
<protein>
    <recommendedName>
        <fullName>Probable Xaa-Pro aminopeptidase P</fullName>
        <shortName>AMPP</shortName>
        <shortName>Aminopeptidase P</shortName>
        <ecNumber>3.4.11.9</ecNumber>
    </recommendedName>
    <alternativeName>
        <fullName>Aminoacylproline aminopeptidase</fullName>
    </alternativeName>
    <alternativeName>
        <fullName>Prolidase</fullName>
    </alternativeName>
</protein>
<name>AMPP1_NEOFI</name>
<comment type="function">
    <text evidence="1">Catalyzes the removal of a penultimate prolyl residue from the N-termini of peptides.</text>
</comment>
<comment type="catalytic activity">
    <reaction>
        <text>Release of any N-terminal amino acid, including proline, that is linked to proline, even from a dipeptide or tripeptide.</text>
        <dbReference type="EC" id="3.4.11.9"/>
    </reaction>
</comment>
<comment type="cofactor">
    <cofactor evidence="1">
        <name>Mn(2+)</name>
        <dbReference type="ChEBI" id="CHEBI:29035"/>
    </cofactor>
    <text evidence="1">Binds 2 manganese ions per subunit.</text>
</comment>
<comment type="similarity">
    <text evidence="2">Belongs to the peptidase M24B family.</text>
</comment>
<feature type="chain" id="PRO_0000411798" description="Probable Xaa-Pro aminopeptidase P">
    <location>
        <begin position="1"/>
        <end position="654"/>
    </location>
</feature>
<feature type="binding site" evidence="1">
    <location>
        <position position="449"/>
    </location>
    <ligand>
        <name>Mn(2+)</name>
        <dbReference type="ChEBI" id="CHEBI:29035"/>
        <label>2</label>
    </ligand>
</feature>
<feature type="binding site" evidence="1">
    <location>
        <position position="460"/>
    </location>
    <ligand>
        <name>Mn(2+)</name>
        <dbReference type="ChEBI" id="CHEBI:29035"/>
        <label>1</label>
    </ligand>
</feature>
<feature type="binding site" evidence="1">
    <location>
        <position position="460"/>
    </location>
    <ligand>
        <name>Mn(2+)</name>
        <dbReference type="ChEBI" id="CHEBI:29035"/>
        <label>2</label>
    </ligand>
</feature>
<feature type="binding site" evidence="1">
    <location>
        <position position="558"/>
    </location>
    <ligand>
        <name>Mn(2+)</name>
        <dbReference type="ChEBI" id="CHEBI:29035"/>
        <label>1</label>
    </ligand>
</feature>
<feature type="binding site" evidence="1">
    <location>
        <position position="572"/>
    </location>
    <ligand>
        <name>Mn(2+)</name>
        <dbReference type="ChEBI" id="CHEBI:29035"/>
        <label>1</label>
    </ligand>
</feature>
<feature type="binding site" evidence="1">
    <location>
        <position position="572"/>
    </location>
    <ligand>
        <name>Mn(2+)</name>
        <dbReference type="ChEBI" id="CHEBI:29035"/>
        <label>2</label>
    </ligand>
</feature>
<reference key="1">
    <citation type="journal article" date="2008" name="PLoS Genet.">
        <title>Genomic islands in the pathogenic filamentous fungus Aspergillus fumigatus.</title>
        <authorList>
            <person name="Fedorova N.D."/>
            <person name="Khaldi N."/>
            <person name="Joardar V.S."/>
            <person name="Maiti R."/>
            <person name="Amedeo P."/>
            <person name="Anderson M.J."/>
            <person name="Crabtree J."/>
            <person name="Silva J.C."/>
            <person name="Badger J.H."/>
            <person name="Albarraq A."/>
            <person name="Angiuoli S."/>
            <person name="Bussey H."/>
            <person name="Bowyer P."/>
            <person name="Cotty P.J."/>
            <person name="Dyer P.S."/>
            <person name="Egan A."/>
            <person name="Galens K."/>
            <person name="Fraser-Liggett C.M."/>
            <person name="Haas B.J."/>
            <person name="Inman J.M."/>
            <person name="Kent R."/>
            <person name="Lemieux S."/>
            <person name="Malavazi I."/>
            <person name="Orvis J."/>
            <person name="Roemer T."/>
            <person name="Ronning C.M."/>
            <person name="Sundaram J.P."/>
            <person name="Sutton G."/>
            <person name="Turner G."/>
            <person name="Venter J.C."/>
            <person name="White O.R."/>
            <person name="Whitty B.R."/>
            <person name="Youngman P."/>
            <person name="Wolfe K.H."/>
            <person name="Goldman G.H."/>
            <person name="Wortman J.R."/>
            <person name="Jiang B."/>
            <person name="Denning D.W."/>
            <person name="Nierman W.C."/>
        </authorList>
    </citation>
    <scope>NUCLEOTIDE SEQUENCE [LARGE SCALE GENOMIC DNA]</scope>
    <source>
        <strain>ATCC 1020 / DSM 3700 / CBS 544.65 / FGSC A1164 / JCM 1740 / NRRL 181 / WB 181</strain>
    </source>
</reference>
<sequence>MLGFRSPIRLCKLSALGSAPLLPISRPKLFSTAVARYAADMETVNTTERLARLRQLMQEHKVDVYIVPSEDSHQSEYIAPCDGRREFISGFSGSAGTAIVSMTKAALSTDGRYFNQASKQLDSNWELLKRGVENVPTWQEWTTEQAEGGKVVGVDPSLITASGARSLEETLKRNGSSLVGISQNLVDLVWGKDRPAPPREKVRVHPDKFAGKTFQEKIADLRKELEKKKTAGFVISMLDEIAWLFNLRGSDIPYNPVFFAYAIITPTKAELYIDDDKITPEVVAHLGQDVVIKPYNSIFADAKALSEARKQEAGETASKFLLSNKASWALSLSLGGEEHVEETRSPIADAKAIKNEVELAGMRACHIRDGAALIEYFAWLENELVNKKTVLDEVDAADKLERIRTKHDLFAGLSFDTISSTGPNGAVIHYKPEKGTCSIIDPDAIYLCDSGAQYLDGTTDVTRTFHFGKPTELEKKAFTLVLKGLIAIDTAVFPKGTSGFALDALARQYLWKEGLDYLHGTGHGIGSYLNVHEGPIGIGTRVQYTEVPIAPGNVISDEPGFYEDGKFGIRIENVIMAREVQTTHKFGDKPWLGFEHVTMAPIGRNLIQPSLLSDLELKWVNDYHAEVWDKTHHFFENDEFTRSWLQRETAPITK</sequence>
<keyword id="KW-0031">Aminopeptidase</keyword>
<keyword id="KW-0378">Hydrolase</keyword>
<keyword id="KW-0464">Manganese</keyword>
<keyword id="KW-0479">Metal-binding</keyword>
<keyword id="KW-0482">Metalloprotease</keyword>
<keyword id="KW-0645">Protease</keyword>
<keyword id="KW-1185">Reference proteome</keyword>
<evidence type="ECO:0000250" key="1"/>
<evidence type="ECO:0000305" key="2"/>
<organism>
    <name type="scientific">Neosartorya fischeri (strain ATCC 1020 / DSM 3700 / CBS 544.65 / FGSC A1164 / JCM 1740 / NRRL 181 / WB 181)</name>
    <name type="common">Aspergillus fischerianus</name>
    <dbReference type="NCBI Taxonomy" id="331117"/>
    <lineage>
        <taxon>Eukaryota</taxon>
        <taxon>Fungi</taxon>
        <taxon>Dikarya</taxon>
        <taxon>Ascomycota</taxon>
        <taxon>Pezizomycotina</taxon>
        <taxon>Eurotiomycetes</taxon>
        <taxon>Eurotiomycetidae</taxon>
        <taxon>Eurotiales</taxon>
        <taxon>Aspergillaceae</taxon>
        <taxon>Aspergillus</taxon>
        <taxon>Aspergillus subgen. Fumigati</taxon>
    </lineage>
</organism>
<proteinExistence type="inferred from homology"/>
<dbReference type="EC" id="3.4.11.9"/>
<dbReference type="EMBL" id="DS027696">
    <property type="protein sequence ID" value="EAW17984.1"/>
    <property type="molecule type" value="Genomic_DNA"/>
</dbReference>
<dbReference type="RefSeq" id="XP_001259881.1">
    <property type="nucleotide sequence ID" value="XM_001259880.1"/>
</dbReference>
<dbReference type="SMR" id="A1DF27"/>
<dbReference type="STRING" id="331117.A1DF27"/>
<dbReference type="MEROPS" id="M24.009"/>
<dbReference type="EnsemblFungi" id="EAW17984">
    <property type="protein sequence ID" value="EAW17984"/>
    <property type="gene ID" value="NFIA_079250"/>
</dbReference>
<dbReference type="GeneID" id="4586437"/>
<dbReference type="KEGG" id="nfi:NFIA_079250"/>
<dbReference type="VEuPathDB" id="FungiDB:NFIA_079250"/>
<dbReference type="eggNOG" id="KOG2413">
    <property type="taxonomic scope" value="Eukaryota"/>
</dbReference>
<dbReference type="HOGENOM" id="CLU_011781_2_2_1"/>
<dbReference type="OMA" id="EPGMILS"/>
<dbReference type="OrthoDB" id="9995434at2759"/>
<dbReference type="Proteomes" id="UP000006702">
    <property type="component" value="Unassembled WGS sequence"/>
</dbReference>
<dbReference type="GO" id="GO:0005737">
    <property type="term" value="C:cytoplasm"/>
    <property type="evidence" value="ECO:0007669"/>
    <property type="project" value="UniProtKB-ARBA"/>
</dbReference>
<dbReference type="GO" id="GO:0046872">
    <property type="term" value="F:metal ion binding"/>
    <property type="evidence" value="ECO:0007669"/>
    <property type="project" value="UniProtKB-KW"/>
</dbReference>
<dbReference type="GO" id="GO:0070006">
    <property type="term" value="F:metalloaminopeptidase activity"/>
    <property type="evidence" value="ECO:0007669"/>
    <property type="project" value="InterPro"/>
</dbReference>
<dbReference type="GO" id="GO:0006508">
    <property type="term" value="P:proteolysis"/>
    <property type="evidence" value="ECO:0007669"/>
    <property type="project" value="UniProtKB-KW"/>
</dbReference>
<dbReference type="CDD" id="cd01085">
    <property type="entry name" value="APP"/>
    <property type="match status" value="1"/>
</dbReference>
<dbReference type="FunFam" id="3.40.350.10:FF:000010">
    <property type="entry name" value="Probable Xaa-Pro aminopeptidase P"/>
    <property type="match status" value="1"/>
</dbReference>
<dbReference type="FunFam" id="3.90.230.10:FF:000007">
    <property type="entry name" value="Xaa-Pro aminopeptidase P"/>
    <property type="match status" value="1"/>
</dbReference>
<dbReference type="FunFam" id="3.40.350.10:FF:000003">
    <property type="entry name" value="Xaa-pro aminopeptidase P"/>
    <property type="match status" value="1"/>
</dbReference>
<dbReference type="Gene3D" id="3.90.230.10">
    <property type="entry name" value="Creatinase/methionine aminopeptidase superfamily"/>
    <property type="match status" value="1"/>
</dbReference>
<dbReference type="Gene3D" id="3.40.350.10">
    <property type="entry name" value="Creatinase/prolidase N-terminal domain"/>
    <property type="match status" value="2"/>
</dbReference>
<dbReference type="InterPro" id="IPR029149">
    <property type="entry name" value="Creatin/AminoP/Spt16_N"/>
</dbReference>
<dbReference type="InterPro" id="IPR036005">
    <property type="entry name" value="Creatinase/aminopeptidase-like"/>
</dbReference>
<dbReference type="InterPro" id="IPR000587">
    <property type="entry name" value="Creatinase_N"/>
</dbReference>
<dbReference type="InterPro" id="IPR000994">
    <property type="entry name" value="Pept_M24"/>
</dbReference>
<dbReference type="InterPro" id="IPR033740">
    <property type="entry name" value="Pept_M24B"/>
</dbReference>
<dbReference type="InterPro" id="IPR032416">
    <property type="entry name" value="Peptidase_M24_C"/>
</dbReference>
<dbReference type="InterPro" id="IPR001131">
    <property type="entry name" value="Peptidase_M24B_aminopep-P_CS"/>
</dbReference>
<dbReference type="InterPro" id="IPR050422">
    <property type="entry name" value="X-Pro_aminopeptidase_P"/>
</dbReference>
<dbReference type="PANTHER" id="PTHR43763">
    <property type="entry name" value="XAA-PRO AMINOPEPTIDASE 1"/>
    <property type="match status" value="1"/>
</dbReference>
<dbReference type="PANTHER" id="PTHR43763:SF6">
    <property type="entry name" value="XAA-PRO AMINOPEPTIDASE 1"/>
    <property type="match status" value="1"/>
</dbReference>
<dbReference type="Pfam" id="PF01321">
    <property type="entry name" value="Creatinase_N"/>
    <property type="match status" value="1"/>
</dbReference>
<dbReference type="Pfam" id="PF16189">
    <property type="entry name" value="Creatinase_N_2"/>
    <property type="match status" value="1"/>
</dbReference>
<dbReference type="Pfam" id="PF00557">
    <property type="entry name" value="Peptidase_M24"/>
    <property type="match status" value="1"/>
</dbReference>
<dbReference type="Pfam" id="PF16188">
    <property type="entry name" value="Peptidase_M24_C"/>
    <property type="match status" value="1"/>
</dbReference>
<dbReference type="SUPFAM" id="SSF55920">
    <property type="entry name" value="Creatinase/aminopeptidase"/>
    <property type="match status" value="1"/>
</dbReference>
<dbReference type="SUPFAM" id="SSF53092">
    <property type="entry name" value="Creatinase/prolidase N-terminal domain"/>
    <property type="match status" value="1"/>
</dbReference>
<dbReference type="PROSITE" id="PS00491">
    <property type="entry name" value="PROLINE_PEPTIDASE"/>
    <property type="match status" value="1"/>
</dbReference>
<gene>
    <name type="primary">ampp</name>
    <name type="ORF">NFIA_079250</name>
</gene>